<feature type="chain" id="PRO_0000125617" description="Large ribosomal subunit protein uL1">
    <location>
        <begin position="1"/>
        <end position="232"/>
    </location>
</feature>
<organism>
    <name type="scientific">Bacteroides thetaiotaomicron (strain ATCC 29148 / DSM 2079 / JCM 5827 / CCUG 10774 / NCTC 10582 / VPI-5482 / E50)</name>
    <dbReference type="NCBI Taxonomy" id="226186"/>
    <lineage>
        <taxon>Bacteria</taxon>
        <taxon>Pseudomonadati</taxon>
        <taxon>Bacteroidota</taxon>
        <taxon>Bacteroidia</taxon>
        <taxon>Bacteroidales</taxon>
        <taxon>Bacteroidaceae</taxon>
        <taxon>Bacteroides</taxon>
    </lineage>
</organism>
<proteinExistence type="inferred from homology"/>
<gene>
    <name evidence="1" type="primary">rplA</name>
    <name type="ordered locus">BT_2737</name>
</gene>
<keyword id="KW-1185">Reference proteome</keyword>
<keyword id="KW-0678">Repressor</keyword>
<keyword id="KW-0687">Ribonucleoprotein</keyword>
<keyword id="KW-0689">Ribosomal protein</keyword>
<keyword id="KW-0694">RNA-binding</keyword>
<keyword id="KW-0699">rRNA-binding</keyword>
<keyword id="KW-0810">Translation regulation</keyword>
<keyword id="KW-0820">tRNA-binding</keyword>
<comment type="function">
    <text evidence="1">Binds directly to 23S rRNA. The L1 stalk is quite mobile in the ribosome, and is involved in E site tRNA release.</text>
</comment>
<comment type="function">
    <text evidence="1">Protein L1 is also a translational repressor protein, it controls the translation of the L11 operon by binding to its mRNA.</text>
</comment>
<comment type="subunit">
    <text evidence="1">Part of the 50S ribosomal subunit.</text>
</comment>
<comment type="similarity">
    <text evidence="1">Belongs to the universal ribosomal protein uL1 family.</text>
</comment>
<dbReference type="EMBL" id="AE015928">
    <property type="protein sequence ID" value="AAO77843.1"/>
    <property type="molecule type" value="Genomic_DNA"/>
</dbReference>
<dbReference type="RefSeq" id="NP_811649.1">
    <property type="nucleotide sequence ID" value="NC_004663.1"/>
</dbReference>
<dbReference type="RefSeq" id="WP_004310894.1">
    <property type="nucleotide sequence ID" value="NZ_UYXG01000001.1"/>
</dbReference>
<dbReference type="SMR" id="Q8A466"/>
<dbReference type="FunCoup" id="Q8A466">
    <property type="interactions" value="633"/>
</dbReference>
<dbReference type="STRING" id="226186.BT_2737"/>
<dbReference type="PaxDb" id="226186-BT_2737"/>
<dbReference type="EnsemblBacteria" id="AAO77843">
    <property type="protein sequence ID" value="AAO77843"/>
    <property type="gene ID" value="BT_2737"/>
</dbReference>
<dbReference type="GeneID" id="93048988"/>
<dbReference type="KEGG" id="bth:BT_2737"/>
<dbReference type="PATRIC" id="fig|226186.12.peg.2780"/>
<dbReference type="eggNOG" id="COG0081">
    <property type="taxonomic scope" value="Bacteria"/>
</dbReference>
<dbReference type="HOGENOM" id="CLU_062853_0_0_10"/>
<dbReference type="InParanoid" id="Q8A466"/>
<dbReference type="OrthoDB" id="9803740at2"/>
<dbReference type="Proteomes" id="UP000001414">
    <property type="component" value="Chromosome"/>
</dbReference>
<dbReference type="GO" id="GO:0015934">
    <property type="term" value="C:large ribosomal subunit"/>
    <property type="evidence" value="ECO:0007669"/>
    <property type="project" value="InterPro"/>
</dbReference>
<dbReference type="GO" id="GO:0019843">
    <property type="term" value="F:rRNA binding"/>
    <property type="evidence" value="ECO:0007669"/>
    <property type="project" value="UniProtKB-UniRule"/>
</dbReference>
<dbReference type="GO" id="GO:0003735">
    <property type="term" value="F:structural constituent of ribosome"/>
    <property type="evidence" value="ECO:0007669"/>
    <property type="project" value="InterPro"/>
</dbReference>
<dbReference type="GO" id="GO:0000049">
    <property type="term" value="F:tRNA binding"/>
    <property type="evidence" value="ECO:0007669"/>
    <property type="project" value="UniProtKB-KW"/>
</dbReference>
<dbReference type="GO" id="GO:0006417">
    <property type="term" value="P:regulation of translation"/>
    <property type="evidence" value="ECO:0007669"/>
    <property type="project" value="UniProtKB-KW"/>
</dbReference>
<dbReference type="GO" id="GO:0006412">
    <property type="term" value="P:translation"/>
    <property type="evidence" value="ECO:0007669"/>
    <property type="project" value="UniProtKB-UniRule"/>
</dbReference>
<dbReference type="CDD" id="cd00403">
    <property type="entry name" value="Ribosomal_L1"/>
    <property type="match status" value="1"/>
</dbReference>
<dbReference type="FunFam" id="3.40.50.790:FF:000001">
    <property type="entry name" value="50S ribosomal protein L1"/>
    <property type="match status" value="1"/>
</dbReference>
<dbReference type="Gene3D" id="3.30.190.20">
    <property type="match status" value="1"/>
</dbReference>
<dbReference type="Gene3D" id="3.40.50.790">
    <property type="match status" value="1"/>
</dbReference>
<dbReference type="HAMAP" id="MF_01318_B">
    <property type="entry name" value="Ribosomal_uL1_B"/>
    <property type="match status" value="1"/>
</dbReference>
<dbReference type="InterPro" id="IPR005878">
    <property type="entry name" value="Ribosom_uL1_bac-type"/>
</dbReference>
<dbReference type="InterPro" id="IPR002143">
    <property type="entry name" value="Ribosomal_uL1"/>
</dbReference>
<dbReference type="InterPro" id="IPR023674">
    <property type="entry name" value="Ribosomal_uL1-like"/>
</dbReference>
<dbReference type="InterPro" id="IPR028364">
    <property type="entry name" value="Ribosomal_uL1/biogenesis"/>
</dbReference>
<dbReference type="InterPro" id="IPR016095">
    <property type="entry name" value="Ribosomal_uL1_3-a/b-sand"/>
</dbReference>
<dbReference type="InterPro" id="IPR023673">
    <property type="entry name" value="Ribosomal_uL1_CS"/>
</dbReference>
<dbReference type="NCBIfam" id="TIGR01169">
    <property type="entry name" value="rplA_bact"/>
    <property type="match status" value="1"/>
</dbReference>
<dbReference type="PANTHER" id="PTHR36427">
    <property type="entry name" value="54S RIBOSOMAL PROTEIN L1, MITOCHONDRIAL"/>
    <property type="match status" value="1"/>
</dbReference>
<dbReference type="PANTHER" id="PTHR36427:SF3">
    <property type="entry name" value="LARGE RIBOSOMAL SUBUNIT PROTEIN UL1M"/>
    <property type="match status" value="1"/>
</dbReference>
<dbReference type="Pfam" id="PF00687">
    <property type="entry name" value="Ribosomal_L1"/>
    <property type="match status" value="1"/>
</dbReference>
<dbReference type="PIRSF" id="PIRSF002155">
    <property type="entry name" value="Ribosomal_L1"/>
    <property type="match status" value="1"/>
</dbReference>
<dbReference type="SUPFAM" id="SSF56808">
    <property type="entry name" value="Ribosomal protein L1"/>
    <property type="match status" value="1"/>
</dbReference>
<dbReference type="PROSITE" id="PS01199">
    <property type="entry name" value="RIBOSOMAL_L1"/>
    <property type="match status" value="1"/>
</dbReference>
<reference key="1">
    <citation type="journal article" date="2003" name="Science">
        <title>A genomic view of the human-Bacteroides thetaiotaomicron symbiosis.</title>
        <authorList>
            <person name="Xu J."/>
            <person name="Bjursell M.K."/>
            <person name="Himrod J."/>
            <person name="Deng S."/>
            <person name="Carmichael L.K."/>
            <person name="Chiang H.C."/>
            <person name="Hooper L.V."/>
            <person name="Gordon J.I."/>
        </authorList>
    </citation>
    <scope>NUCLEOTIDE SEQUENCE [LARGE SCALE GENOMIC DNA]</scope>
    <source>
        <strain>ATCC 29148 / DSM 2079 / JCM 5827 / CCUG 10774 / NCTC 10582 / VPI-5482 / E50</strain>
    </source>
</reference>
<evidence type="ECO:0000255" key="1">
    <source>
        <dbReference type="HAMAP-Rule" id="MF_01318"/>
    </source>
</evidence>
<evidence type="ECO:0000305" key="2"/>
<name>RL1_BACTN</name>
<protein>
    <recommendedName>
        <fullName evidence="1">Large ribosomal subunit protein uL1</fullName>
    </recommendedName>
    <alternativeName>
        <fullName evidence="2">50S ribosomal protein L1</fullName>
    </alternativeName>
</protein>
<accession>Q8A466</accession>
<sequence length="232" mass="24863">MGKLTKNQKLAAEKIEAGKAYSLKEAASLVKEITFTKFDASLDIDVRLGVDPRKANQMVRGVVSLPHGTGKEVRVLVLCTPDAEAAAKEAGADYVGLDEYIEKIKGGWTDIDVIITMPSIMGKIGALGRVLGPRGLMPNPKSGTVTMDVAKAVKEVKQGKIDFKVDKSGIVHTSIGKVSFSPDQIRDNAKEFISTLNKLKPTAAKGTYIKSIYLSSTMSAGIKIDPKSVDEI</sequence>